<feature type="chain" id="PRO_0000295152" description="Protein transport protein Sec31A">
    <location>
        <begin position="1"/>
        <end position="1254"/>
    </location>
</feature>
<feature type="repeat" description="WD 1">
    <location>
        <begin position="4"/>
        <end position="47"/>
    </location>
</feature>
<feature type="repeat" description="WD 2">
    <location>
        <begin position="64"/>
        <end position="111"/>
    </location>
</feature>
<feature type="repeat" description="WD 3">
    <location>
        <begin position="120"/>
        <end position="160"/>
    </location>
</feature>
<feature type="repeat" description="WD 4">
    <location>
        <begin position="166"/>
        <end position="206"/>
    </location>
</feature>
<feature type="repeat" description="WD 5">
    <location>
        <begin position="209"/>
        <end position="254"/>
    </location>
</feature>
<feature type="repeat" description="WD 6">
    <location>
        <begin position="258"/>
        <end position="298"/>
    </location>
</feature>
<feature type="repeat" description="WD 7">
    <location>
        <begin position="301"/>
        <end position="341"/>
    </location>
</feature>
<feature type="repeat" description="WD 8; interaction with SEC13" evidence="5">
    <location>
        <begin position="397"/>
        <end position="428"/>
    </location>
</feature>
<feature type="region of interest" description="Disordered" evidence="6">
    <location>
        <begin position="364"/>
        <end position="386"/>
    </location>
</feature>
<feature type="region of interest" description="Disordered" evidence="6">
    <location>
        <begin position="818"/>
        <end position="892"/>
    </location>
</feature>
<feature type="region of interest" description="Disordered" evidence="6">
    <location>
        <begin position="983"/>
        <end position="1008"/>
    </location>
</feature>
<feature type="region of interest" description="Disordered" evidence="6">
    <location>
        <begin position="1058"/>
        <end position="1125"/>
    </location>
</feature>
<feature type="compositionally biased region" description="Low complexity" evidence="6">
    <location>
        <begin position="364"/>
        <end position="383"/>
    </location>
</feature>
<feature type="compositionally biased region" description="Low complexity" evidence="6">
    <location>
        <begin position="832"/>
        <end position="846"/>
    </location>
</feature>
<feature type="compositionally biased region" description="Polar residues" evidence="6">
    <location>
        <begin position="847"/>
        <end position="863"/>
    </location>
</feature>
<feature type="compositionally biased region" description="Polar residues" evidence="6">
    <location>
        <begin position="872"/>
        <end position="881"/>
    </location>
</feature>
<feature type="compositionally biased region" description="Low complexity" evidence="6">
    <location>
        <begin position="1080"/>
        <end position="1091"/>
    </location>
</feature>
<proteinExistence type="evidence at transcript level"/>
<keyword id="KW-0963">Cytoplasm</keyword>
<keyword id="KW-0968">Cytoplasmic vesicle</keyword>
<keyword id="KW-0256">Endoplasmic reticulum</keyword>
<keyword id="KW-0931">ER-Golgi transport</keyword>
<keyword id="KW-0472">Membrane</keyword>
<keyword id="KW-0653">Protein transport</keyword>
<keyword id="KW-1185">Reference proteome</keyword>
<keyword id="KW-0677">Repeat</keyword>
<keyword id="KW-0813">Transport</keyword>
<keyword id="KW-0853">WD repeat</keyword>
<reference key="1">
    <citation type="submission" date="2003-07" db="EMBL/GenBank/DDBJ databases">
        <authorList>
            <consortium name="NIH - Zebrafish Gene Collection (ZGC) project"/>
        </authorList>
    </citation>
    <scope>NUCLEOTIDE SEQUENCE [LARGE SCALE MRNA]</scope>
    <source>
        <strain>AB</strain>
    </source>
</reference>
<organism>
    <name type="scientific">Danio rerio</name>
    <name type="common">Zebrafish</name>
    <name type="synonym">Brachydanio rerio</name>
    <dbReference type="NCBI Taxonomy" id="7955"/>
    <lineage>
        <taxon>Eukaryota</taxon>
        <taxon>Metazoa</taxon>
        <taxon>Chordata</taxon>
        <taxon>Craniata</taxon>
        <taxon>Vertebrata</taxon>
        <taxon>Euteleostomi</taxon>
        <taxon>Actinopterygii</taxon>
        <taxon>Neopterygii</taxon>
        <taxon>Teleostei</taxon>
        <taxon>Ostariophysi</taxon>
        <taxon>Cypriniformes</taxon>
        <taxon>Danionidae</taxon>
        <taxon>Danioninae</taxon>
        <taxon>Danio</taxon>
    </lineage>
</organism>
<gene>
    <name type="primary">sec31a</name>
    <name type="synonym">sec31l1</name>
    <name type="synonym">sec31p</name>
</gene>
<protein>
    <recommendedName>
        <fullName>Protein transport protein Sec31A</fullName>
    </recommendedName>
    <alternativeName>
        <fullName>SEC31-like protein 1</fullName>
    </alternativeName>
    <alternativeName>
        <fullName>SEC31-related protein A</fullName>
    </alternativeName>
</protein>
<evidence type="ECO:0000250" key="1"/>
<evidence type="ECO:0000250" key="2">
    <source>
        <dbReference type="UniProtKB" id="O94979"/>
    </source>
</evidence>
<evidence type="ECO:0000250" key="3">
    <source>
        <dbReference type="UniProtKB" id="Q3UPL0"/>
    </source>
</evidence>
<evidence type="ECO:0000250" key="4">
    <source>
        <dbReference type="UniProtKB" id="Q9Z2Q1"/>
    </source>
</evidence>
<evidence type="ECO:0000255" key="5">
    <source>
        <dbReference type="PROSITE-ProRule" id="PRU00221"/>
    </source>
</evidence>
<evidence type="ECO:0000256" key="6">
    <source>
        <dbReference type="SAM" id="MobiDB-lite"/>
    </source>
</evidence>
<evidence type="ECO:0000305" key="7"/>
<name>SC31A_DANRE</name>
<comment type="function">
    <text evidence="2 4">Component of the coat protein complex II (COPII) which promotes the formation of transport vesicles from the endoplasmic reticulum (ER). The coat has two main functions, the physical deformation of the endoplasmic reticulum membrane into vesicles and the selection of cargo molecules (By similarity).</text>
</comment>
<comment type="subunit">
    <text evidence="2 4">COPII is composed of at least 5 proteins: the SEC23/24 complex, the SEC13/31 complex and SAR1. SEC13 and SEC31 make a 2:2 tetramer that forms the edge element of the COPII outer coat. The tetramer self-assembles in multiple copies to form the complete polyhedral cage. Interacts (via WD 8) with SEC13 (By similarity).</text>
</comment>
<comment type="subcellular location">
    <subcellularLocation>
        <location evidence="4">Cytoplasm</location>
    </subcellularLocation>
    <subcellularLocation>
        <location evidence="4">Cytoplasmic vesicle</location>
        <location evidence="4">COPII-coated vesicle membrane</location>
        <topology evidence="4">Peripheral membrane protein</topology>
        <orientation evidence="4">Cytoplasmic side</orientation>
    </subcellularLocation>
    <subcellularLocation>
        <location evidence="4">Endoplasmic reticulum membrane</location>
        <topology evidence="1">Peripheral membrane protein</topology>
    </subcellularLocation>
    <text evidence="3 4">Associates with membranes in a GTP-dependent manner. Localizes to endoplasmic reticulum exit sites (ERES), also known as transitional endoplasmic reticulum (tER).</text>
</comment>
<comment type="similarity">
    <text evidence="7">Belongs to the WD repeat SEC31 family.</text>
</comment>
<sequence length="1254" mass="135709">MKLKEINRTAIQAWSPAQQHPIYLAAGTSAQQLDATFSTNASLEIFELDLADSALAMKSCGSFSSPHRYHKLVWGPHGIENQGLPSGVLIAGGENGNIILYDASKIIAGDSEVIISQSEKHTGAVRALDVNSFQSNLVASGGNESEIYIWDLNNFSSPMTPGPKTQPQEDISCVAWNKQVQHILASASPSGKASVWDLRKNDLIIKVSDHSNRMHCSGLAWNPEVATQLVLASEDDRMPVIQMWDLRFATSPLKVLENHTRGILAIAWSVADPELLLSCGKDNRILCWNPNTAEVLYELPTSTQWCFDIQWCPRNPAVLSAAAFDGHISIYSIMGGSNDNANNLQADQLSSSFGNVDPFGTGKTLPPLQLPQQTSPQSTITPLKKPPKWIRRPVGASFAFGGKLVTLDNIKPTAQQPQQTAAHVVHISQVVTETDFIHRSNQLQTTLNAGNFLEYCQNKIETVQNEFERTVWSFLKVNFEEDARLKYLELLGYEKEELALKIASALEGNCKPKEADMDKEEVLAEEEAESDLDDIPVNEEEPVVEETSNTEVPPAPASDAINLKVSQDIDGLITQALLTGDYEAAVNLCLHDNRMADGIILAIAGGPELLAKTQRKYFSKTESKISKLISAVVMKDWLDILETCDLQNWKEALAAVMTYAKPEEFSALCGLLGSRLESSEDVELQAQACLCYICAGTVEQLVSFWTKTQDSCSPLSLQELVEKVVVLQRAVEKAQGAVPADMGALLAEKMNQYASLLASQGSLQTAISYLPTNTEQVSVQQLRERLSRALGQHQHLQQPAAAVTGIQKMHQRRPAAVPMQTYTQPQPPQVPAQPAAPAVPPQYYQQGRSATTVTSWSNQTPTALPSVPRQLVPSSDPQGDSTPPAFGLQSPAMASVPASTPFMYSQQYQNYPPVQQFTPSAGTPGIYQPLPYASSAGAPLPPPPSSSSSAAVYPPQFMLSASSQASAPPQSFCPPPAVSSGGCFQHGGPGSPTSYLPPPGARAPGTQHEPALIPASQRTDGFYQETAWGLEGPQNGWNDPPALSRAAKKKKVPQHFTPPAPITAPIMAPLGDPQAPAGMQTLQPQQQVPDQSAGPATFTPIQQQPLGPRNPSMPQGNMEGAPGAPIGDVIKPLQAIPTEKITKKPIPEEHMVLKTTFEGLIQKCLTAASDPQTKRKLDDAHKRLELLYDKLREQTLSPAIIGGLHNMAQSIECRSYADGLNIHTHIVSNSNFSETSAFMPVLKVVLTQANKLGV</sequence>
<accession>Q7SYD5</accession>
<dbReference type="EMBL" id="BC054909">
    <property type="protein sequence ID" value="AAH54909.1"/>
    <property type="molecule type" value="mRNA"/>
</dbReference>
<dbReference type="SMR" id="Q7SYD5"/>
<dbReference type="FunCoup" id="Q7SYD5">
    <property type="interactions" value="3075"/>
</dbReference>
<dbReference type="STRING" id="7955.ENSDARP00000104171"/>
<dbReference type="PaxDb" id="7955-ENSDARP00000104171"/>
<dbReference type="AGR" id="ZFIN:ZDB-GENE-020919-2"/>
<dbReference type="ZFIN" id="ZDB-GENE-020919-2">
    <property type="gene designation" value="sec31a"/>
</dbReference>
<dbReference type="eggNOG" id="KOG0307">
    <property type="taxonomic scope" value="Eukaryota"/>
</dbReference>
<dbReference type="InParanoid" id="Q7SYD5"/>
<dbReference type="PhylomeDB" id="Q7SYD5"/>
<dbReference type="Reactome" id="R-DRE-204005">
    <property type="pathway name" value="COPII-mediated vesicle transport"/>
</dbReference>
<dbReference type="Reactome" id="R-DRE-2132295">
    <property type="pathway name" value="MHC class II antigen presentation"/>
</dbReference>
<dbReference type="Reactome" id="R-DRE-983170">
    <property type="pathway name" value="Antigen Presentation: Folding, assembly and peptide loading of class I MHC"/>
</dbReference>
<dbReference type="PRO" id="PR:Q7SYD5"/>
<dbReference type="Proteomes" id="UP000000437">
    <property type="component" value="Unplaced"/>
</dbReference>
<dbReference type="GO" id="GO:0030127">
    <property type="term" value="C:COPII vesicle coat"/>
    <property type="evidence" value="ECO:0000250"/>
    <property type="project" value="UniProtKB"/>
</dbReference>
<dbReference type="GO" id="GO:0030134">
    <property type="term" value="C:COPII-coated ER to Golgi transport vesicle"/>
    <property type="evidence" value="ECO:0000250"/>
    <property type="project" value="UniProtKB"/>
</dbReference>
<dbReference type="GO" id="GO:0070971">
    <property type="term" value="C:endoplasmic reticulum exit site"/>
    <property type="evidence" value="ECO:0000250"/>
    <property type="project" value="UniProtKB"/>
</dbReference>
<dbReference type="GO" id="GO:0005789">
    <property type="term" value="C:endoplasmic reticulum membrane"/>
    <property type="evidence" value="ECO:0007669"/>
    <property type="project" value="UniProtKB-SubCell"/>
</dbReference>
<dbReference type="GO" id="GO:0005198">
    <property type="term" value="F:structural molecule activity"/>
    <property type="evidence" value="ECO:0000318"/>
    <property type="project" value="GO_Central"/>
</dbReference>
<dbReference type="GO" id="GO:0090110">
    <property type="term" value="P:COPII-coated vesicle cargo loading"/>
    <property type="evidence" value="ECO:0000318"/>
    <property type="project" value="GO_Central"/>
</dbReference>
<dbReference type="GO" id="GO:0055123">
    <property type="term" value="P:digestive system development"/>
    <property type="evidence" value="ECO:0000315"/>
    <property type="project" value="ZFIN"/>
</dbReference>
<dbReference type="GO" id="GO:0007029">
    <property type="term" value="P:endoplasmic reticulum organization"/>
    <property type="evidence" value="ECO:0000315"/>
    <property type="project" value="ZFIN"/>
</dbReference>
<dbReference type="GO" id="GO:0001889">
    <property type="term" value="P:liver development"/>
    <property type="evidence" value="ECO:0000315"/>
    <property type="project" value="ZFIN"/>
</dbReference>
<dbReference type="GO" id="GO:0015031">
    <property type="term" value="P:protein transport"/>
    <property type="evidence" value="ECO:0007669"/>
    <property type="project" value="UniProtKB-KW"/>
</dbReference>
<dbReference type="FunFam" id="1.20.940.10:FF:000001">
    <property type="entry name" value="Protein transport protein Sec31A isoform A"/>
    <property type="match status" value="1"/>
</dbReference>
<dbReference type="FunFam" id="2.130.10.10:FF:000009">
    <property type="entry name" value="Protein transport protein Sec31A isoform A"/>
    <property type="match status" value="1"/>
</dbReference>
<dbReference type="FunFam" id="1.25.40.1030:FF:000011">
    <property type="entry name" value="SEC31 homolog B, COPII coat complex component"/>
    <property type="match status" value="1"/>
</dbReference>
<dbReference type="Gene3D" id="1.25.40.1030">
    <property type="match status" value="1"/>
</dbReference>
<dbReference type="Gene3D" id="1.20.940.10">
    <property type="entry name" value="Functional domain of the splicing factor Prp18"/>
    <property type="match status" value="1"/>
</dbReference>
<dbReference type="Gene3D" id="2.130.10.10">
    <property type="entry name" value="YVTN repeat-like/Quinoprotein amine dehydrogenase"/>
    <property type="match status" value="1"/>
</dbReference>
<dbReference type="InterPro" id="IPR040251">
    <property type="entry name" value="SEC31-like"/>
</dbReference>
<dbReference type="InterPro" id="IPR015943">
    <property type="entry name" value="WD40/YVTN_repeat-like_dom_sf"/>
</dbReference>
<dbReference type="InterPro" id="IPR036322">
    <property type="entry name" value="WD40_repeat_dom_sf"/>
</dbReference>
<dbReference type="InterPro" id="IPR001680">
    <property type="entry name" value="WD40_rpt"/>
</dbReference>
<dbReference type="PANTHER" id="PTHR13923:SF23">
    <property type="entry name" value="PROTEIN TRANSPORT PROTEIN SEC31A"/>
    <property type="match status" value="1"/>
</dbReference>
<dbReference type="PANTHER" id="PTHR13923">
    <property type="entry name" value="SEC31-RELATED PROTEIN"/>
    <property type="match status" value="1"/>
</dbReference>
<dbReference type="Pfam" id="PF00400">
    <property type="entry name" value="WD40"/>
    <property type="match status" value="2"/>
</dbReference>
<dbReference type="SMART" id="SM00320">
    <property type="entry name" value="WD40"/>
    <property type="match status" value="6"/>
</dbReference>
<dbReference type="SUPFAM" id="SSF50978">
    <property type="entry name" value="WD40 repeat-like"/>
    <property type="match status" value="1"/>
</dbReference>
<dbReference type="PROSITE" id="PS50082">
    <property type="entry name" value="WD_REPEATS_2"/>
    <property type="match status" value="2"/>
</dbReference>
<dbReference type="PROSITE" id="PS50294">
    <property type="entry name" value="WD_REPEATS_REGION"/>
    <property type="match status" value="1"/>
</dbReference>